<gene>
    <name type="primary">pbpC</name>
    <name type="synonym">yfgN</name>
    <name type="ordered locus">b2519</name>
    <name type="ordered locus">JW2503</name>
</gene>
<keyword id="KW-0121">Carboxypeptidase</keyword>
<keyword id="KW-0997">Cell inner membrane</keyword>
<keyword id="KW-1003">Cell membrane</keyword>
<keyword id="KW-0133">Cell shape</keyword>
<keyword id="KW-0961">Cell wall biogenesis/degradation</keyword>
<keyword id="KW-0328">Glycosyltransferase</keyword>
<keyword id="KW-0378">Hydrolase</keyword>
<keyword id="KW-0472">Membrane</keyword>
<keyword id="KW-0511">Multifunctional enzyme</keyword>
<keyword id="KW-0573">Peptidoglycan synthesis</keyword>
<keyword id="KW-0645">Protease</keyword>
<keyword id="KW-1185">Reference proteome</keyword>
<keyword id="KW-0735">Signal-anchor</keyword>
<keyword id="KW-0808">Transferase</keyword>
<keyword id="KW-0812">Transmembrane</keyword>
<keyword id="KW-1133">Transmembrane helix</keyword>
<accession>P76577</accession>
<accession>P76986</accession>
<accession>P76988</accession>
<protein>
    <recommendedName>
        <fullName>Penicillin-binding protein 1C</fullName>
        <shortName>PBP-1c</shortName>
        <shortName>PBP1c</shortName>
    </recommendedName>
    <domain>
        <recommendedName>
            <fullName>Penicillin-insensitive transglycosylase</fullName>
            <ecNumber evidence="4">2.4.99.28</ecNumber>
        </recommendedName>
        <alternativeName>
            <fullName>Peptidoglycan TGase</fullName>
        </alternativeName>
    </domain>
    <domain>
        <recommendedName>
            <fullName>Transpeptidase-like module</fullName>
        </recommendedName>
    </domain>
</protein>
<sequence length="770" mass="85067">MPRLLTKRGCWITLAAAPFLLFLAAWGADKLWPLPLHEVNPARVVVAQDGTPLWRFADADGIWRYPVTIEDVSPRYLEALINYEDRWFWKHPGVNPFSVARAAWQDLTSGRVISGGSTLTMQVARLLDPHPKTFGGKIRQLWRALQLEWHLSKREILTLYLNRAPFGGTLQGIGAASWAYLGKSPANLSYSEAAMLAVLPQAPSRLRPDRWPERAEAARNKVLERMAVQGVWSREQVKESREEPIWLAPRQMPQLAPLFSRMMLGKSKSDKITTTLDAGLQRRLEELAQNWKGRLPPRSSLAMIVVDHTDMRVRGWVGSVDLNDDSRFGHVDMVNSIRSPGSVLKPFVYGLALDEGLIHPASLLQDVPRRTGDYRPGNFDSGFHGPISMSEALVRSLNLPAVQVLEAYGPKRFAAKLRNVGLPLYLPNGAAPNLSLILGGAGAKLEDMAAAYTAFARHGKAGKLRLQPDDPLLERPLMSSGAAWIIRRIMADEAQPLPDSALPRVAPLAWKTGTSYGYRDAWAIGVNARYVIGIWTGRPDGTPVVGQFGFASAVPLLNQVNNILLSRSANLPEDPRPNSVTRGVICWPGGQSLPEGDGNCRRRLATWLLDGSQPPTLLLPEQEGINGIRFPIWLDENGKRVAADCPQARQEMINVWPLPLEPWLPASERRAVRLPPASTSCPPYGHDAQLPLQLTGVRDGAIIKRLPGAAEATLPLQSSGGAGERWWFLNGEPLTERGRNVTLHLTDKGDYQLLVMDDVGQIATVKFVMQ</sequence>
<feature type="chain" id="PRO_0000083188" description="Penicillin-binding protein 1C">
    <location>
        <begin position="1"/>
        <end position="770"/>
    </location>
</feature>
<feature type="topological domain" description="Cytoplasmic" evidence="3">
    <location>
        <begin position="1"/>
        <end position="8"/>
    </location>
</feature>
<feature type="transmembrane region" description="Helical; Signal-anchor for type II membrane protein" evidence="3">
    <location>
        <begin position="9"/>
        <end position="29"/>
    </location>
</feature>
<feature type="topological domain" description="Periplasmic" evidence="3">
    <location>
        <begin position="30"/>
        <end position="770"/>
    </location>
</feature>
<feature type="region of interest" description="Transglycosylase">
    <location>
        <begin position="43"/>
        <end position="213"/>
    </location>
</feature>
<feature type="region of interest" description="Transpeptidase">
    <location>
        <begin position="278"/>
        <end position="559"/>
    </location>
</feature>
<feature type="active site" description="Proton donor; for transglycosylase activity" evidence="2">
    <location>
        <position position="84"/>
    </location>
</feature>
<feature type="active site" description="Acyl-ester intermediate; for transpeptidase activity" evidence="2">
    <location>
        <position position="342"/>
    </location>
</feature>
<comment type="function">
    <text evidence="4">Cell wall formation. The enzyme has a penicillin-insensitive transglycosylase N-terminal domain (formation of linear glycan strands) and a transpeptidase C-terminal domain which may not be functional.</text>
</comment>
<comment type="catalytic activity">
    <reaction evidence="4">
        <text>[GlcNAc-(1-&gt;4)-Mur2Ac(oyl-L-Ala-gamma-D-Glu-L-Lys-D-Ala-D-Ala)](n)-di-trans,octa-cis-undecaprenyl diphosphate + beta-D-GlcNAc-(1-&gt;4)-Mur2Ac(oyl-L-Ala-gamma-D-Glu-L-Lys-D-Ala-D-Ala)-di-trans,octa-cis-undecaprenyl diphosphate = [GlcNAc-(1-&gt;4)-Mur2Ac(oyl-L-Ala-gamma-D-Glu-L-Lys-D-Ala-D-Ala)](n+1)-di-trans,octa-cis-undecaprenyl diphosphate + di-trans,octa-cis-undecaprenyl diphosphate + H(+)</text>
        <dbReference type="Rhea" id="RHEA:23708"/>
        <dbReference type="Rhea" id="RHEA-COMP:9602"/>
        <dbReference type="Rhea" id="RHEA-COMP:9603"/>
        <dbReference type="ChEBI" id="CHEBI:15378"/>
        <dbReference type="ChEBI" id="CHEBI:58405"/>
        <dbReference type="ChEBI" id="CHEBI:60033"/>
        <dbReference type="ChEBI" id="CHEBI:78435"/>
        <dbReference type="EC" id="2.4.99.28"/>
    </reaction>
</comment>
<comment type="activity regulation">
    <text>Transglycosylase activity can be inhibited by moenomycin.</text>
</comment>
<comment type="pathway">
    <text>Cell wall biogenesis; peptidoglycan biosynthesis.</text>
</comment>
<comment type="subcellular location">
    <subcellularLocation>
        <location evidence="4">Cell inner membrane</location>
        <topology evidence="1">Single-pass type II membrane protein</topology>
    </subcellularLocation>
</comment>
<comment type="disruption phenotype">
    <text evidence="4">Deletion results in an altered mode of murein synthesis.</text>
</comment>
<comment type="miscellaneous">
    <text evidence="4">Due to the fact that PBP-1c can neither substitute for PBP-1a or PBP-1b, nor rescue a PBP-1a/PBP-1b double mutant, it is possible that PBP-1c has its own distinct function. Moreover it does not bind to most of the beta-lactams known to bind to other binding proteins, suggesting that the penicillin-binding domain must be different from those present in PBP-1a and PBP-1b. It may function as a transglycosylase only.</text>
</comment>
<comment type="similarity">
    <text evidence="5">In the N-terminal section; belongs to the glycosyltransferase 51 family.</text>
</comment>
<comment type="similarity">
    <text evidence="5">In the C-terminal section; belongs to the transpeptidase family.</text>
</comment>
<name>PBPC_ECOLI</name>
<dbReference type="EC" id="2.4.99.28" evidence="4"/>
<dbReference type="EMBL" id="U88571">
    <property type="protein sequence ID" value="AAB48052.1"/>
    <property type="molecule type" value="Genomic_DNA"/>
</dbReference>
<dbReference type="EMBL" id="U00096">
    <property type="protein sequence ID" value="AAC75572.1"/>
    <property type="molecule type" value="Genomic_DNA"/>
</dbReference>
<dbReference type="EMBL" id="AP009048">
    <property type="protein sequence ID" value="BAA16410.2"/>
    <property type="molecule type" value="Genomic_DNA"/>
</dbReference>
<dbReference type="PIR" id="F65028">
    <property type="entry name" value="F65028"/>
</dbReference>
<dbReference type="RefSeq" id="NP_417014.1">
    <property type="nucleotide sequence ID" value="NC_000913.3"/>
</dbReference>
<dbReference type="RefSeq" id="WP_001137675.1">
    <property type="nucleotide sequence ID" value="NZ_LN832404.1"/>
</dbReference>
<dbReference type="SMR" id="P76577"/>
<dbReference type="BioGRID" id="4260591">
    <property type="interactions" value="309"/>
</dbReference>
<dbReference type="DIP" id="DIP-10442N"/>
<dbReference type="FunCoup" id="P76577">
    <property type="interactions" value="203"/>
</dbReference>
<dbReference type="IntAct" id="P76577">
    <property type="interactions" value="9"/>
</dbReference>
<dbReference type="STRING" id="511145.b2519"/>
<dbReference type="DrugBank" id="DB01053">
    <property type="generic name" value="Benzylpenicillin"/>
</dbReference>
<dbReference type="DrugBank" id="DB01327">
    <property type="generic name" value="Cefazolin"/>
</dbReference>
<dbReference type="DrugBank" id="DB09050">
    <property type="generic name" value="Ceftolozane"/>
</dbReference>
<dbReference type="CAZy" id="GT51">
    <property type="family name" value="Glycosyltransferase Family 51"/>
</dbReference>
<dbReference type="PaxDb" id="511145-b2519"/>
<dbReference type="EnsemblBacteria" id="AAC75572">
    <property type="protein sequence ID" value="AAC75572"/>
    <property type="gene ID" value="b2519"/>
</dbReference>
<dbReference type="GeneID" id="947152"/>
<dbReference type="KEGG" id="ecj:JW2503"/>
<dbReference type="KEGG" id="eco:b2519"/>
<dbReference type="KEGG" id="ecoc:C3026_13965"/>
<dbReference type="PATRIC" id="fig|511145.12.peg.2618"/>
<dbReference type="EchoBASE" id="EB3962"/>
<dbReference type="eggNOG" id="COG4953">
    <property type="taxonomic scope" value="Bacteria"/>
</dbReference>
<dbReference type="HOGENOM" id="CLU_006354_7_3_6"/>
<dbReference type="InParanoid" id="P76577"/>
<dbReference type="OMA" id="APENFDM"/>
<dbReference type="OrthoDB" id="9766909at2"/>
<dbReference type="PhylomeDB" id="P76577"/>
<dbReference type="BioCyc" id="EcoCyc:G7322-MONOMER"/>
<dbReference type="BioCyc" id="MetaCyc:G7322-MONOMER"/>
<dbReference type="UniPathway" id="UPA00219"/>
<dbReference type="PRO" id="PR:P76577"/>
<dbReference type="Proteomes" id="UP000000625">
    <property type="component" value="Chromosome"/>
</dbReference>
<dbReference type="GO" id="GO:0016020">
    <property type="term" value="C:membrane"/>
    <property type="evidence" value="ECO:0000255"/>
    <property type="project" value="EcoCyc"/>
</dbReference>
<dbReference type="GO" id="GO:0030288">
    <property type="term" value="C:outer membrane-bounded periplasmic space"/>
    <property type="evidence" value="ECO:0000318"/>
    <property type="project" value="GO_Central"/>
</dbReference>
<dbReference type="GO" id="GO:0005886">
    <property type="term" value="C:plasma membrane"/>
    <property type="evidence" value="ECO:0007669"/>
    <property type="project" value="UniProtKB-SubCell"/>
</dbReference>
<dbReference type="GO" id="GO:0004180">
    <property type="term" value="F:carboxypeptidase activity"/>
    <property type="evidence" value="ECO:0007669"/>
    <property type="project" value="UniProtKB-KW"/>
</dbReference>
<dbReference type="GO" id="GO:0008658">
    <property type="term" value="F:penicillin binding"/>
    <property type="evidence" value="ECO:0000314"/>
    <property type="project" value="EcoliWiki"/>
</dbReference>
<dbReference type="GO" id="GO:0008955">
    <property type="term" value="F:peptidoglycan glycosyltransferase activity"/>
    <property type="evidence" value="ECO:0000314"/>
    <property type="project" value="EcoCyc"/>
</dbReference>
<dbReference type="GO" id="GO:0071555">
    <property type="term" value="P:cell wall organization"/>
    <property type="evidence" value="ECO:0007669"/>
    <property type="project" value="UniProtKB-KW"/>
</dbReference>
<dbReference type="GO" id="GO:0009252">
    <property type="term" value="P:peptidoglycan biosynthetic process"/>
    <property type="evidence" value="ECO:0000314"/>
    <property type="project" value="EcoliWiki"/>
</dbReference>
<dbReference type="GO" id="GO:0051781">
    <property type="term" value="P:positive regulation of cell division"/>
    <property type="evidence" value="ECO:0000314"/>
    <property type="project" value="EcoliWiki"/>
</dbReference>
<dbReference type="GO" id="GO:0006508">
    <property type="term" value="P:proteolysis"/>
    <property type="evidence" value="ECO:0007669"/>
    <property type="project" value="UniProtKB-KW"/>
</dbReference>
<dbReference type="GO" id="GO:0008360">
    <property type="term" value="P:regulation of cell shape"/>
    <property type="evidence" value="ECO:0007669"/>
    <property type="project" value="UniProtKB-KW"/>
</dbReference>
<dbReference type="FunFam" id="1.10.3810.10:FF:000006">
    <property type="entry name" value="Penicillin-binding protein 1C"/>
    <property type="match status" value="1"/>
</dbReference>
<dbReference type="FunFam" id="3.40.710.10:FF:000021">
    <property type="entry name" value="Penicillin-binding protein 1C"/>
    <property type="match status" value="1"/>
</dbReference>
<dbReference type="Gene3D" id="1.10.3810.10">
    <property type="entry name" value="Biosynthetic peptidoglycan transglycosylase-like"/>
    <property type="match status" value="1"/>
</dbReference>
<dbReference type="Gene3D" id="3.40.710.10">
    <property type="entry name" value="DD-peptidase/beta-lactamase superfamily"/>
    <property type="match status" value="1"/>
</dbReference>
<dbReference type="InterPro" id="IPR012338">
    <property type="entry name" value="Beta-lactam/transpept-like"/>
</dbReference>
<dbReference type="InterPro" id="IPR001264">
    <property type="entry name" value="Glyco_trans_51"/>
</dbReference>
<dbReference type="InterPro" id="IPR050396">
    <property type="entry name" value="Glycosyltr_51/Transpeptidase"/>
</dbReference>
<dbReference type="InterPro" id="IPR023346">
    <property type="entry name" value="Lysozyme-like_dom_sf"/>
</dbReference>
<dbReference type="InterPro" id="IPR011815">
    <property type="entry name" value="PBP_1c"/>
</dbReference>
<dbReference type="InterPro" id="IPR009647">
    <property type="entry name" value="PBP_C"/>
</dbReference>
<dbReference type="InterPro" id="IPR036950">
    <property type="entry name" value="PBP_transglycosylase"/>
</dbReference>
<dbReference type="InterPro" id="IPR001460">
    <property type="entry name" value="PCN-bd_Tpept"/>
</dbReference>
<dbReference type="NCBIfam" id="TIGR02073">
    <property type="entry name" value="PBP_1c"/>
    <property type="match status" value="1"/>
</dbReference>
<dbReference type="NCBIfam" id="NF008414">
    <property type="entry name" value="PRK11240.1"/>
    <property type="match status" value="1"/>
</dbReference>
<dbReference type="PANTHER" id="PTHR32282">
    <property type="entry name" value="BINDING PROTEIN TRANSPEPTIDASE, PUTATIVE-RELATED"/>
    <property type="match status" value="1"/>
</dbReference>
<dbReference type="PANTHER" id="PTHR32282:SF15">
    <property type="entry name" value="PENICILLIN-BINDING PROTEIN 1C"/>
    <property type="match status" value="1"/>
</dbReference>
<dbReference type="Pfam" id="PF06832">
    <property type="entry name" value="BiPBP_C"/>
    <property type="match status" value="1"/>
</dbReference>
<dbReference type="Pfam" id="PF00912">
    <property type="entry name" value="Transgly"/>
    <property type="match status" value="1"/>
</dbReference>
<dbReference type="Pfam" id="PF00905">
    <property type="entry name" value="Transpeptidase"/>
    <property type="match status" value="1"/>
</dbReference>
<dbReference type="SUPFAM" id="SSF56601">
    <property type="entry name" value="beta-lactamase/transpeptidase-like"/>
    <property type="match status" value="1"/>
</dbReference>
<dbReference type="SUPFAM" id="SSF53955">
    <property type="entry name" value="Lysozyme-like"/>
    <property type="match status" value="1"/>
</dbReference>
<reference key="1">
    <citation type="journal article" date="1999" name="J. Biol. Chem.">
        <title>Cloning and characterization of PBP 1C, a third member of the multimodular class A penicillin-binding proteins of Escherichia coli.</title>
        <authorList>
            <person name="Schiffer G."/>
            <person name="Hoeltje J.-V."/>
        </authorList>
    </citation>
    <scope>NUCLEOTIDE SEQUENCE [GENOMIC DNA]</scope>
    <scope>FUNCTION</scope>
    <scope>CATALYTIC ACTIVITY</scope>
    <scope>SUBCELLULAR LOCATION</scope>
    <scope>DISRUPTION PHENOTYPE</scope>
    <source>
        <strain>K12</strain>
    </source>
</reference>
<reference key="2">
    <citation type="journal article" date="1997" name="DNA Res.">
        <title>Construction of a contiguous 874-kb sequence of the Escherichia coli-K12 genome corresponding to 50.0-68.8 min on the linkage map and analysis of its sequence features.</title>
        <authorList>
            <person name="Yamamoto Y."/>
            <person name="Aiba H."/>
            <person name="Baba T."/>
            <person name="Hayashi K."/>
            <person name="Inada T."/>
            <person name="Isono K."/>
            <person name="Itoh T."/>
            <person name="Kimura S."/>
            <person name="Kitagawa M."/>
            <person name="Makino K."/>
            <person name="Miki T."/>
            <person name="Mitsuhashi N."/>
            <person name="Mizobuchi K."/>
            <person name="Mori H."/>
            <person name="Nakade S."/>
            <person name="Nakamura Y."/>
            <person name="Nashimoto H."/>
            <person name="Oshima T."/>
            <person name="Oyama S."/>
            <person name="Saito N."/>
            <person name="Sampei G."/>
            <person name="Satoh Y."/>
            <person name="Sivasundaram S."/>
            <person name="Tagami H."/>
            <person name="Takahashi H."/>
            <person name="Takeda J."/>
            <person name="Takemoto K."/>
            <person name="Uehara K."/>
            <person name="Wada C."/>
            <person name="Yamagata S."/>
            <person name="Horiuchi T."/>
        </authorList>
    </citation>
    <scope>NUCLEOTIDE SEQUENCE [LARGE SCALE GENOMIC DNA]</scope>
    <source>
        <strain>K12 / W3110 / ATCC 27325 / DSM 5911</strain>
    </source>
</reference>
<reference key="3">
    <citation type="journal article" date="1997" name="Science">
        <title>The complete genome sequence of Escherichia coli K-12.</title>
        <authorList>
            <person name="Blattner F.R."/>
            <person name="Plunkett G. III"/>
            <person name="Bloch C.A."/>
            <person name="Perna N.T."/>
            <person name="Burland V."/>
            <person name="Riley M."/>
            <person name="Collado-Vides J."/>
            <person name="Glasner J.D."/>
            <person name="Rode C.K."/>
            <person name="Mayhew G.F."/>
            <person name="Gregor J."/>
            <person name="Davis N.W."/>
            <person name="Kirkpatrick H.A."/>
            <person name="Goeden M.A."/>
            <person name="Rose D.J."/>
            <person name="Mau B."/>
            <person name="Shao Y."/>
        </authorList>
    </citation>
    <scope>NUCLEOTIDE SEQUENCE [LARGE SCALE GENOMIC DNA]</scope>
    <source>
        <strain>K12 / MG1655 / ATCC 47076</strain>
    </source>
</reference>
<reference key="4">
    <citation type="journal article" date="2006" name="Mol. Syst. Biol.">
        <title>Highly accurate genome sequences of Escherichia coli K-12 strains MG1655 and W3110.</title>
        <authorList>
            <person name="Hayashi K."/>
            <person name="Morooka N."/>
            <person name="Yamamoto Y."/>
            <person name="Fujita K."/>
            <person name="Isono K."/>
            <person name="Choi S."/>
            <person name="Ohtsubo E."/>
            <person name="Baba T."/>
            <person name="Wanner B.L."/>
            <person name="Mori H."/>
            <person name="Horiuchi T."/>
        </authorList>
    </citation>
    <scope>NUCLEOTIDE SEQUENCE [LARGE SCALE GENOMIC DNA]</scope>
    <scope>SEQUENCE REVISION</scope>
    <source>
        <strain>K12 / W3110 / ATCC 27325 / DSM 5911</strain>
    </source>
</reference>
<reference key="5">
    <citation type="journal article" date="1998" name="Microbiol. Mol. Biol. Rev.">
        <title>Multimodular penicillin-binding proteins: an enigmatic family of orthologs and paralogs.</title>
        <authorList>
            <person name="Goffin C."/>
            <person name="Ghuysen J.-M."/>
        </authorList>
    </citation>
    <scope>REVIEW</scope>
</reference>
<evidence type="ECO:0000250" key="1"/>
<evidence type="ECO:0000250" key="2">
    <source>
        <dbReference type="UniProtKB" id="P02919"/>
    </source>
</evidence>
<evidence type="ECO:0000255" key="3"/>
<evidence type="ECO:0000269" key="4">
    <source>
    </source>
</evidence>
<evidence type="ECO:0000305" key="5"/>
<organism>
    <name type="scientific">Escherichia coli (strain K12)</name>
    <dbReference type="NCBI Taxonomy" id="83333"/>
    <lineage>
        <taxon>Bacteria</taxon>
        <taxon>Pseudomonadati</taxon>
        <taxon>Pseudomonadota</taxon>
        <taxon>Gammaproteobacteria</taxon>
        <taxon>Enterobacterales</taxon>
        <taxon>Enterobacteriaceae</taxon>
        <taxon>Escherichia</taxon>
    </lineage>
</organism>
<proteinExistence type="evidence at protein level"/>